<sequence>MMEWRDEGALLSVRRHGESSAIIEVFTAAHGRHAGVVRGGASRKIAPILQPGAQLDLTWKARLDEHMGAFTVEPLRSRTALLGDRLGLAGLNAICAMLHVTLPEREPHSTLWQESMALLDALDRPGWPPAYLRWEMRLLEETGFGLDLTRCAVTGSREDLAFVSPKTGRAVSRGAAGGWADRLFPLPLALLGQGPASAEEVRQGLAITGHFLGRELAPLLNGRPLPEARARLMELLARA</sequence>
<keyword id="KW-0227">DNA damage</keyword>
<keyword id="KW-0233">DNA recombination</keyword>
<keyword id="KW-0234">DNA repair</keyword>
<comment type="function">
    <text evidence="1">Involved in DNA repair and RecF pathway recombination.</text>
</comment>
<comment type="similarity">
    <text evidence="1">Belongs to the RecO family.</text>
</comment>
<reference key="1">
    <citation type="submission" date="2007-02" db="EMBL/GenBank/DDBJ databases">
        <title>Complete sequence of chromosome 1 of Rhodobacter sphaeroides ATCC 17029.</title>
        <authorList>
            <person name="Copeland A."/>
            <person name="Lucas S."/>
            <person name="Lapidus A."/>
            <person name="Barry K."/>
            <person name="Detter J.C."/>
            <person name="Glavina del Rio T."/>
            <person name="Hammon N."/>
            <person name="Israni S."/>
            <person name="Dalin E."/>
            <person name="Tice H."/>
            <person name="Pitluck S."/>
            <person name="Kiss H."/>
            <person name="Brettin T."/>
            <person name="Bruce D."/>
            <person name="Han C."/>
            <person name="Tapia R."/>
            <person name="Gilna P."/>
            <person name="Schmutz J."/>
            <person name="Larimer F."/>
            <person name="Land M."/>
            <person name="Hauser L."/>
            <person name="Kyrpides N."/>
            <person name="Mikhailova N."/>
            <person name="Richardson P."/>
            <person name="Mackenzie C."/>
            <person name="Choudhary M."/>
            <person name="Donohue T.J."/>
            <person name="Kaplan S."/>
        </authorList>
    </citation>
    <scope>NUCLEOTIDE SEQUENCE [LARGE SCALE GENOMIC DNA]</scope>
    <source>
        <strain>ATCC 17029 / ATH 2.4.9</strain>
    </source>
</reference>
<organism>
    <name type="scientific">Cereibacter sphaeroides (strain ATCC 17029 / ATH 2.4.9)</name>
    <name type="common">Rhodobacter sphaeroides</name>
    <dbReference type="NCBI Taxonomy" id="349101"/>
    <lineage>
        <taxon>Bacteria</taxon>
        <taxon>Pseudomonadati</taxon>
        <taxon>Pseudomonadota</taxon>
        <taxon>Alphaproteobacteria</taxon>
        <taxon>Rhodobacterales</taxon>
        <taxon>Paracoccaceae</taxon>
        <taxon>Cereibacter</taxon>
    </lineage>
</organism>
<proteinExistence type="inferred from homology"/>
<dbReference type="EMBL" id="CP000577">
    <property type="protein sequence ID" value="ABN75427.1"/>
    <property type="molecule type" value="Genomic_DNA"/>
</dbReference>
<dbReference type="SMR" id="A3PGG1"/>
<dbReference type="KEGG" id="rsh:Rsph17029_0311"/>
<dbReference type="HOGENOM" id="CLU_086029_0_0_5"/>
<dbReference type="GO" id="GO:0043590">
    <property type="term" value="C:bacterial nucleoid"/>
    <property type="evidence" value="ECO:0007669"/>
    <property type="project" value="TreeGrafter"/>
</dbReference>
<dbReference type="GO" id="GO:0006310">
    <property type="term" value="P:DNA recombination"/>
    <property type="evidence" value="ECO:0007669"/>
    <property type="project" value="UniProtKB-UniRule"/>
</dbReference>
<dbReference type="GO" id="GO:0006302">
    <property type="term" value="P:double-strand break repair"/>
    <property type="evidence" value="ECO:0007669"/>
    <property type="project" value="TreeGrafter"/>
</dbReference>
<dbReference type="Gene3D" id="2.40.50.140">
    <property type="entry name" value="Nucleic acid-binding proteins"/>
    <property type="match status" value="1"/>
</dbReference>
<dbReference type="Gene3D" id="1.20.1440.120">
    <property type="entry name" value="Recombination protein O, C-terminal domain"/>
    <property type="match status" value="1"/>
</dbReference>
<dbReference type="HAMAP" id="MF_00201">
    <property type="entry name" value="RecO"/>
    <property type="match status" value="1"/>
</dbReference>
<dbReference type="InterPro" id="IPR037278">
    <property type="entry name" value="ARFGAP/RecO"/>
</dbReference>
<dbReference type="InterPro" id="IPR022572">
    <property type="entry name" value="DNA_rep/recomb_RecO_N"/>
</dbReference>
<dbReference type="InterPro" id="IPR012340">
    <property type="entry name" value="NA-bd_OB-fold"/>
</dbReference>
<dbReference type="InterPro" id="IPR003717">
    <property type="entry name" value="RecO"/>
</dbReference>
<dbReference type="InterPro" id="IPR042242">
    <property type="entry name" value="RecO_C"/>
</dbReference>
<dbReference type="NCBIfam" id="TIGR00613">
    <property type="entry name" value="reco"/>
    <property type="match status" value="1"/>
</dbReference>
<dbReference type="PANTHER" id="PTHR33991">
    <property type="entry name" value="DNA REPAIR PROTEIN RECO"/>
    <property type="match status" value="1"/>
</dbReference>
<dbReference type="PANTHER" id="PTHR33991:SF1">
    <property type="entry name" value="DNA REPAIR PROTEIN RECO"/>
    <property type="match status" value="1"/>
</dbReference>
<dbReference type="Pfam" id="PF02565">
    <property type="entry name" value="RecO_C"/>
    <property type="match status" value="1"/>
</dbReference>
<dbReference type="Pfam" id="PF11967">
    <property type="entry name" value="RecO_N"/>
    <property type="match status" value="1"/>
</dbReference>
<dbReference type="SUPFAM" id="SSF57863">
    <property type="entry name" value="ArfGap/RecO-like zinc finger"/>
    <property type="match status" value="1"/>
</dbReference>
<dbReference type="SUPFAM" id="SSF50249">
    <property type="entry name" value="Nucleic acid-binding proteins"/>
    <property type="match status" value="1"/>
</dbReference>
<feature type="chain" id="PRO_1000012153" description="DNA repair protein RecO">
    <location>
        <begin position="1"/>
        <end position="239"/>
    </location>
</feature>
<gene>
    <name evidence="1" type="primary">recO</name>
    <name type="ordered locus">Rsph17029_0311</name>
</gene>
<name>RECO_CERS1</name>
<protein>
    <recommendedName>
        <fullName evidence="1">DNA repair protein RecO</fullName>
    </recommendedName>
    <alternativeName>
        <fullName evidence="1">Recombination protein O</fullName>
    </alternativeName>
</protein>
<accession>A3PGG1</accession>
<evidence type="ECO:0000255" key="1">
    <source>
        <dbReference type="HAMAP-Rule" id="MF_00201"/>
    </source>
</evidence>